<gene>
    <name evidence="1" type="primary">folD</name>
    <name type="ordered locus">CA_C2083</name>
</gene>
<keyword id="KW-0028">Amino-acid biosynthesis</keyword>
<keyword id="KW-0368">Histidine biosynthesis</keyword>
<keyword id="KW-0378">Hydrolase</keyword>
<keyword id="KW-0486">Methionine biosynthesis</keyword>
<keyword id="KW-0511">Multifunctional enzyme</keyword>
<keyword id="KW-0521">NADP</keyword>
<keyword id="KW-0554">One-carbon metabolism</keyword>
<keyword id="KW-0560">Oxidoreductase</keyword>
<keyword id="KW-0658">Purine biosynthesis</keyword>
<keyword id="KW-1185">Reference proteome</keyword>
<protein>
    <recommendedName>
        <fullName evidence="1">Bifunctional protein FolD</fullName>
    </recommendedName>
    <domain>
        <recommendedName>
            <fullName evidence="1">Methylenetetrahydrofolate dehydrogenase</fullName>
            <ecNumber evidence="1">1.5.1.5</ecNumber>
        </recommendedName>
    </domain>
    <domain>
        <recommendedName>
            <fullName evidence="1">Methenyltetrahydrofolate cyclohydrolase</fullName>
            <ecNumber evidence="1">3.5.4.9</ecNumber>
        </recommendedName>
    </domain>
</protein>
<comment type="function">
    <text evidence="1">Catalyzes the oxidation of 5,10-methylenetetrahydrofolate to 5,10-methenyltetrahydrofolate and then the hydrolysis of 5,10-methenyltetrahydrofolate to 10-formyltetrahydrofolate.</text>
</comment>
<comment type="catalytic activity">
    <reaction evidence="1">
        <text>(6R)-5,10-methylene-5,6,7,8-tetrahydrofolate + NADP(+) = (6R)-5,10-methenyltetrahydrofolate + NADPH</text>
        <dbReference type="Rhea" id="RHEA:22812"/>
        <dbReference type="ChEBI" id="CHEBI:15636"/>
        <dbReference type="ChEBI" id="CHEBI:57455"/>
        <dbReference type="ChEBI" id="CHEBI:57783"/>
        <dbReference type="ChEBI" id="CHEBI:58349"/>
        <dbReference type="EC" id="1.5.1.5"/>
    </reaction>
</comment>
<comment type="catalytic activity">
    <reaction evidence="1">
        <text>(6R)-5,10-methenyltetrahydrofolate + H2O = (6R)-10-formyltetrahydrofolate + H(+)</text>
        <dbReference type="Rhea" id="RHEA:23700"/>
        <dbReference type="ChEBI" id="CHEBI:15377"/>
        <dbReference type="ChEBI" id="CHEBI:15378"/>
        <dbReference type="ChEBI" id="CHEBI:57455"/>
        <dbReference type="ChEBI" id="CHEBI:195366"/>
        <dbReference type="EC" id="3.5.4.9"/>
    </reaction>
</comment>
<comment type="pathway">
    <text evidence="1">One-carbon metabolism; tetrahydrofolate interconversion.</text>
</comment>
<comment type="subunit">
    <text evidence="1">Homodimer.</text>
</comment>
<comment type="similarity">
    <text evidence="1">Belongs to the tetrahydrofolate dehydrogenase/cyclohydrolase family.</text>
</comment>
<reference key="1">
    <citation type="journal article" date="2001" name="J. Bacteriol.">
        <title>Genome sequence and comparative analysis of the solvent-producing bacterium Clostridium acetobutylicum.</title>
        <authorList>
            <person name="Noelling J."/>
            <person name="Breton G."/>
            <person name="Omelchenko M.V."/>
            <person name="Makarova K.S."/>
            <person name="Zeng Q."/>
            <person name="Gibson R."/>
            <person name="Lee H.M."/>
            <person name="Dubois J."/>
            <person name="Qiu D."/>
            <person name="Hitti J."/>
            <person name="Wolf Y.I."/>
            <person name="Tatusov R.L."/>
            <person name="Sabathe F."/>
            <person name="Doucette-Stamm L.A."/>
            <person name="Soucaille P."/>
            <person name="Daly M.J."/>
            <person name="Bennett G.N."/>
            <person name="Koonin E.V."/>
            <person name="Smith D.R."/>
        </authorList>
    </citation>
    <scope>NUCLEOTIDE SEQUENCE [LARGE SCALE GENOMIC DNA]</scope>
    <source>
        <strain>ATCC 824 / DSM 792 / JCM 1419 / IAM 19013 / LMG 5710 / NBRC 13948 / NRRL B-527 / VKM B-1787 / 2291 / W</strain>
    </source>
</reference>
<name>FOLD_CLOAB</name>
<sequence length="278" mass="30346">MGDIINGKAESQKYKDKIIEFINERKKQGLDIPCIASITVGDDGGSLYYVNNQKKVSESLGIEFKSIFLDESIREEELIKLIEGLNVDNKIHGIMLQLPLPNHIDAKLVTSKIDANKDIDSLTDINTGKFYKGEKSFIPCTPRSIINLIKSLNVDICGKNAVVIGRSNIVGKPTAQLLLNENATVTICHSRTQNLKDICKKADIIVSAIGRPGFITDEFVNEKSIVIDVGTTVVDGKLRGDVVFDEVIKKAAYVTPVPGGVGAMTTTMLILNVCEALK</sequence>
<feature type="chain" id="PRO_0000268315" description="Bifunctional protein FolD">
    <location>
        <begin position="1"/>
        <end position="278"/>
    </location>
</feature>
<feature type="binding site" evidence="1">
    <location>
        <begin position="165"/>
        <end position="167"/>
    </location>
    <ligand>
        <name>NADP(+)</name>
        <dbReference type="ChEBI" id="CHEBI:58349"/>
    </ligand>
</feature>
<feature type="binding site" evidence="1">
    <location>
        <position position="190"/>
    </location>
    <ligand>
        <name>NADP(+)</name>
        <dbReference type="ChEBI" id="CHEBI:58349"/>
    </ligand>
</feature>
<feature type="binding site" evidence="1">
    <location>
        <position position="231"/>
    </location>
    <ligand>
        <name>NADP(+)</name>
        <dbReference type="ChEBI" id="CHEBI:58349"/>
    </ligand>
</feature>
<organism>
    <name type="scientific">Clostridium acetobutylicum (strain ATCC 824 / DSM 792 / JCM 1419 / IAM 19013 / LMG 5710 / NBRC 13948 / NRRL B-527 / VKM B-1787 / 2291 / W)</name>
    <dbReference type="NCBI Taxonomy" id="272562"/>
    <lineage>
        <taxon>Bacteria</taxon>
        <taxon>Bacillati</taxon>
        <taxon>Bacillota</taxon>
        <taxon>Clostridia</taxon>
        <taxon>Eubacteriales</taxon>
        <taxon>Clostridiaceae</taxon>
        <taxon>Clostridium</taxon>
    </lineage>
</organism>
<evidence type="ECO:0000255" key="1">
    <source>
        <dbReference type="HAMAP-Rule" id="MF_01576"/>
    </source>
</evidence>
<dbReference type="EC" id="1.5.1.5" evidence="1"/>
<dbReference type="EC" id="3.5.4.9" evidence="1"/>
<dbReference type="EMBL" id="AE001437">
    <property type="protein sequence ID" value="AAK80042.1"/>
    <property type="molecule type" value="Genomic_DNA"/>
</dbReference>
<dbReference type="PIR" id="G97156">
    <property type="entry name" value="G97156"/>
</dbReference>
<dbReference type="RefSeq" id="NP_348702.1">
    <property type="nucleotide sequence ID" value="NC_003030.1"/>
</dbReference>
<dbReference type="RefSeq" id="WP_010965383.1">
    <property type="nucleotide sequence ID" value="NC_003030.1"/>
</dbReference>
<dbReference type="SMR" id="Q97HC9"/>
<dbReference type="STRING" id="272562.CA_C2083"/>
<dbReference type="KEGG" id="cac:CA_C2083"/>
<dbReference type="PATRIC" id="fig|272562.8.peg.2286"/>
<dbReference type="eggNOG" id="COG0190">
    <property type="taxonomic scope" value="Bacteria"/>
</dbReference>
<dbReference type="HOGENOM" id="CLU_034045_2_1_9"/>
<dbReference type="OrthoDB" id="9803580at2"/>
<dbReference type="UniPathway" id="UPA00193"/>
<dbReference type="Proteomes" id="UP000000814">
    <property type="component" value="Chromosome"/>
</dbReference>
<dbReference type="GO" id="GO:0005829">
    <property type="term" value="C:cytosol"/>
    <property type="evidence" value="ECO:0007669"/>
    <property type="project" value="TreeGrafter"/>
</dbReference>
<dbReference type="GO" id="GO:0004477">
    <property type="term" value="F:methenyltetrahydrofolate cyclohydrolase activity"/>
    <property type="evidence" value="ECO:0007669"/>
    <property type="project" value="UniProtKB-UniRule"/>
</dbReference>
<dbReference type="GO" id="GO:0004488">
    <property type="term" value="F:methylenetetrahydrofolate dehydrogenase (NADP+) activity"/>
    <property type="evidence" value="ECO:0007669"/>
    <property type="project" value="UniProtKB-UniRule"/>
</dbReference>
<dbReference type="GO" id="GO:0000105">
    <property type="term" value="P:L-histidine biosynthetic process"/>
    <property type="evidence" value="ECO:0007669"/>
    <property type="project" value="UniProtKB-KW"/>
</dbReference>
<dbReference type="GO" id="GO:0009086">
    <property type="term" value="P:methionine biosynthetic process"/>
    <property type="evidence" value="ECO:0007669"/>
    <property type="project" value="UniProtKB-KW"/>
</dbReference>
<dbReference type="GO" id="GO:0006164">
    <property type="term" value="P:purine nucleotide biosynthetic process"/>
    <property type="evidence" value="ECO:0007669"/>
    <property type="project" value="UniProtKB-KW"/>
</dbReference>
<dbReference type="GO" id="GO:0035999">
    <property type="term" value="P:tetrahydrofolate interconversion"/>
    <property type="evidence" value="ECO:0007669"/>
    <property type="project" value="UniProtKB-UniRule"/>
</dbReference>
<dbReference type="CDD" id="cd01080">
    <property type="entry name" value="NAD_bind_m-THF_DH_Cyclohyd"/>
    <property type="match status" value="1"/>
</dbReference>
<dbReference type="FunFam" id="3.40.50.720:FF:000006">
    <property type="entry name" value="Bifunctional protein FolD"/>
    <property type="match status" value="1"/>
</dbReference>
<dbReference type="FunFam" id="3.40.50.10860:FF:000005">
    <property type="entry name" value="C-1-tetrahydrofolate synthase, cytoplasmic, putative"/>
    <property type="match status" value="1"/>
</dbReference>
<dbReference type="Gene3D" id="3.40.50.10860">
    <property type="entry name" value="Leucine Dehydrogenase, chain A, domain 1"/>
    <property type="match status" value="1"/>
</dbReference>
<dbReference type="Gene3D" id="3.40.50.720">
    <property type="entry name" value="NAD(P)-binding Rossmann-like Domain"/>
    <property type="match status" value="1"/>
</dbReference>
<dbReference type="HAMAP" id="MF_01576">
    <property type="entry name" value="THF_DHG_CYH"/>
    <property type="match status" value="1"/>
</dbReference>
<dbReference type="InterPro" id="IPR046346">
    <property type="entry name" value="Aminoacid_DH-like_N_sf"/>
</dbReference>
<dbReference type="InterPro" id="IPR036291">
    <property type="entry name" value="NAD(P)-bd_dom_sf"/>
</dbReference>
<dbReference type="InterPro" id="IPR000672">
    <property type="entry name" value="THF_DH/CycHdrlase"/>
</dbReference>
<dbReference type="InterPro" id="IPR020630">
    <property type="entry name" value="THF_DH/CycHdrlase_cat_dom"/>
</dbReference>
<dbReference type="InterPro" id="IPR020867">
    <property type="entry name" value="THF_DH/CycHdrlase_CS"/>
</dbReference>
<dbReference type="InterPro" id="IPR020631">
    <property type="entry name" value="THF_DH/CycHdrlase_NAD-bd_dom"/>
</dbReference>
<dbReference type="NCBIfam" id="NF010769">
    <property type="entry name" value="PRK14172.1"/>
    <property type="match status" value="1"/>
</dbReference>
<dbReference type="PANTHER" id="PTHR48099:SF5">
    <property type="entry name" value="C-1-TETRAHYDROFOLATE SYNTHASE, CYTOPLASMIC"/>
    <property type="match status" value="1"/>
</dbReference>
<dbReference type="PANTHER" id="PTHR48099">
    <property type="entry name" value="C-1-TETRAHYDROFOLATE SYNTHASE, CYTOPLASMIC-RELATED"/>
    <property type="match status" value="1"/>
</dbReference>
<dbReference type="Pfam" id="PF00763">
    <property type="entry name" value="THF_DHG_CYH"/>
    <property type="match status" value="1"/>
</dbReference>
<dbReference type="Pfam" id="PF02882">
    <property type="entry name" value="THF_DHG_CYH_C"/>
    <property type="match status" value="1"/>
</dbReference>
<dbReference type="PRINTS" id="PR00085">
    <property type="entry name" value="THFDHDRGNASE"/>
</dbReference>
<dbReference type="SUPFAM" id="SSF53223">
    <property type="entry name" value="Aminoacid dehydrogenase-like, N-terminal domain"/>
    <property type="match status" value="1"/>
</dbReference>
<dbReference type="SUPFAM" id="SSF51735">
    <property type="entry name" value="NAD(P)-binding Rossmann-fold domains"/>
    <property type="match status" value="1"/>
</dbReference>
<dbReference type="PROSITE" id="PS00766">
    <property type="entry name" value="THF_DHG_CYH_1"/>
    <property type="match status" value="1"/>
</dbReference>
<accession>Q97HC9</accession>
<proteinExistence type="inferred from homology"/>